<organism>
    <name type="scientific">Streptomyces griseus subsp. griseus (strain JCM 4626 / CBS 651.72 / NBRC 13350 / KCC S-0626 / ISP 5235)</name>
    <dbReference type="NCBI Taxonomy" id="455632"/>
    <lineage>
        <taxon>Bacteria</taxon>
        <taxon>Bacillati</taxon>
        <taxon>Actinomycetota</taxon>
        <taxon>Actinomycetes</taxon>
        <taxon>Kitasatosporales</taxon>
        <taxon>Streptomycetaceae</taxon>
        <taxon>Streptomyces</taxon>
    </lineage>
</organism>
<proteinExistence type="inferred from homology"/>
<sequence>MAKVRVYELAKEFGVESKVVMAKLQELGEFVRSASSTIEAPVVRKLTDALQGPGGNAGKSAAKPGAPRKAAPAKPAAPSPAAAARPAAPKPGAPAPKPAEAPSSTPAAPSAPSAGPRPGPKPAPKAAPVTPVPAAEFSAPAPAQPAAPQPQAPRPAGATPGPRPTPARPAPAGGQRDGGRDGGQRDGGRGGERGGDRPARPAGQGAPRPGGARPAGPRPGNNPFTSGGSTGMARPSAPRPGGAPRPGGGQERPGAPRPQGSGPGGAPRPQGGQGQGGARPTPGGMPRPQAPRPGGGPAGNRPNPGMMPQRPAAGPRPGPGGGGRGPGGGGRPGAGGGGRPGGGGFAGRPGGGGGGGFAGRPAGPGGGGGAGRPGGGGGFGGRPGFGGRPGGPGGRGGTQGAFGRPGGPARRGRKSKRQRRQEYEAMQAPSVGGVMLPRGNGQAVRLSRGASLTDFAEKINANPASLVAVMMNLGEMVTATQSVSDETLRLLAEEMNYVLEIVSPEEEDRELLESFDIEFGEDEGGEEALVSRPPVVTVMGHVDHGKTRLLDAIRKTNVVAGEAGGITQHIGAYQVSSEVNGEDRKITFIDTPGHEAFTAMRARGAKSTDIAILVVAANDGVMPQTIEALNHAKAAEVPIVVAVNKIDVEGADPTKVRGQLTEFGLVAEEYGGDTMFVDISAKQGLNIEALLEAVVLTADASLDLRANPEQDAQGIAIESHLDRGRGAVSTVLVQRGTLRIGDTVVVGDAYGRVRAMLDDNGQNVQEAGPSTPVLVLGLTNVPGAGDNLLVVDEDRTARQIAEKRAARERNANFARKGVRFSLENLDEALKAGLVQELNLIIKGDASGSVEALESSLLQLDVGEEVDIRILHRGVGAVTESDINLATGSDAIVIGFNVRAAGRAEQMAEREGVDVRYYSVIYQAIEEIEAALKGLLKPEYEEVELGTAEIREIFRSSKLGNIAGVLVRSGEVKRNTKARLLRDGKVIAENLNISGLRRFKDDVTEIREGFEGGINLGNFNDIKIDDVIATYEMREKPRG</sequence>
<keyword id="KW-0963">Cytoplasm</keyword>
<keyword id="KW-0342">GTP-binding</keyword>
<keyword id="KW-0396">Initiation factor</keyword>
<keyword id="KW-0547">Nucleotide-binding</keyword>
<keyword id="KW-0648">Protein biosynthesis</keyword>
<comment type="function">
    <text evidence="2">One of the essential components for the initiation of protein synthesis. Protects formylmethionyl-tRNA from spontaneous hydrolysis and promotes its binding to the 30S ribosomal subunits. Also involved in the hydrolysis of GTP during the formation of the 70S ribosomal complex.</text>
</comment>
<comment type="subcellular location">
    <subcellularLocation>
        <location evidence="2">Cytoplasm</location>
    </subcellularLocation>
</comment>
<comment type="similarity">
    <text evidence="2">Belongs to the TRAFAC class translation factor GTPase superfamily. Classic translation factor GTPase family. IF-2 subfamily.</text>
</comment>
<feature type="chain" id="PRO_1000093828" description="Translation initiation factor IF-2">
    <location>
        <begin position="1"/>
        <end position="1038"/>
    </location>
</feature>
<feature type="domain" description="tr-type G">
    <location>
        <begin position="531"/>
        <end position="703"/>
    </location>
</feature>
<feature type="region of interest" description="Disordered" evidence="3">
    <location>
        <begin position="48"/>
        <end position="426"/>
    </location>
</feature>
<feature type="region of interest" description="G1" evidence="1">
    <location>
        <begin position="540"/>
        <end position="547"/>
    </location>
</feature>
<feature type="region of interest" description="G2" evidence="1">
    <location>
        <begin position="565"/>
        <end position="569"/>
    </location>
</feature>
<feature type="region of interest" description="G3" evidence="1">
    <location>
        <begin position="590"/>
        <end position="593"/>
    </location>
</feature>
<feature type="region of interest" description="G4" evidence="1">
    <location>
        <begin position="644"/>
        <end position="647"/>
    </location>
</feature>
<feature type="region of interest" description="G5" evidence="1">
    <location>
        <begin position="680"/>
        <end position="682"/>
    </location>
</feature>
<feature type="compositionally biased region" description="Low complexity" evidence="3">
    <location>
        <begin position="58"/>
        <end position="87"/>
    </location>
</feature>
<feature type="compositionally biased region" description="Pro residues" evidence="3">
    <location>
        <begin position="88"/>
        <end position="99"/>
    </location>
</feature>
<feature type="compositionally biased region" description="Low complexity" evidence="3">
    <location>
        <begin position="100"/>
        <end position="114"/>
    </location>
</feature>
<feature type="compositionally biased region" description="Pro residues" evidence="3">
    <location>
        <begin position="115"/>
        <end position="125"/>
    </location>
</feature>
<feature type="compositionally biased region" description="Low complexity" evidence="3">
    <location>
        <begin position="126"/>
        <end position="141"/>
    </location>
</feature>
<feature type="compositionally biased region" description="Pro residues" evidence="3">
    <location>
        <begin position="142"/>
        <end position="153"/>
    </location>
</feature>
<feature type="compositionally biased region" description="Basic and acidic residues" evidence="3">
    <location>
        <begin position="177"/>
        <end position="199"/>
    </location>
</feature>
<feature type="compositionally biased region" description="Low complexity" evidence="3">
    <location>
        <begin position="200"/>
        <end position="219"/>
    </location>
</feature>
<feature type="compositionally biased region" description="Gly residues" evidence="3">
    <location>
        <begin position="261"/>
        <end position="277"/>
    </location>
</feature>
<feature type="compositionally biased region" description="Low complexity" evidence="3">
    <location>
        <begin position="299"/>
        <end position="315"/>
    </location>
</feature>
<feature type="compositionally biased region" description="Gly residues" evidence="3">
    <location>
        <begin position="319"/>
        <end position="406"/>
    </location>
</feature>
<feature type="compositionally biased region" description="Basic residues" evidence="3">
    <location>
        <begin position="410"/>
        <end position="419"/>
    </location>
</feature>
<feature type="binding site" evidence="2">
    <location>
        <begin position="540"/>
        <end position="547"/>
    </location>
    <ligand>
        <name>GTP</name>
        <dbReference type="ChEBI" id="CHEBI:37565"/>
    </ligand>
</feature>
<feature type="binding site" evidence="2">
    <location>
        <begin position="590"/>
        <end position="594"/>
    </location>
    <ligand>
        <name>GTP</name>
        <dbReference type="ChEBI" id="CHEBI:37565"/>
    </ligand>
</feature>
<feature type="binding site" evidence="2">
    <location>
        <begin position="644"/>
        <end position="647"/>
    </location>
    <ligand>
        <name>GTP</name>
        <dbReference type="ChEBI" id="CHEBI:37565"/>
    </ligand>
</feature>
<reference key="1">
    <citation type="journal article" date="2008" name="J. Bacteriol.">
        <title>Genome sequence of the streptomycin-producing microorganism Streptomyces griseus IFO 13350.</title>
        <authorList>
            <person name="Ohnishi Y."/>
            <person name="Ishikawa J."/>
            <person name="Hara H."/>
            <person name="Suzuki H."/>
            <person name="Ikenoya M."/>
            <person name="Ikeda H."/>
            <person name="Yamashita A."/>
            <person name="Hattori M."/>
            <person name="Horinouchi S."/>
        </authorList>
    </citation>
    <scope>NUCLEOTIDE SEQUENCE [LARGE SCALE GENOMIC DNA]</scope>
    <source>
        <strain>JCM 4626 / CBS 651.72 / NBRC 13350 / KCC S-0626 / ISP 5235</strain>
    </source>
</reference>
<name>IF2_STRGG</name>
<gene>
    <name evidence="2" type="primary">infB</name>
    <name type="ordered locus">SGR_1811</name>
</gene>
<dbReference type="EMBL" id="AP009493">
    <property type="protein sequence ID" value="BAG18640.1"/>
    <property type="molecule type" value="Genomic_DNA"/>
</dbReference>
<dbReference type="RefSeq" id="WP_012378793.1">
    <property type="nucleotide sequence ID" value="NC_010572.1"/>
</dbReference>
<dbReference type="SMR" id="B1VYN5"/>
<dbReference type="KEGG" id="sgr:SGR_1811"/>
<dbReference type="eggNOG" id="COG0532">
    <property type="taxonomic scope" value="Bacteria"/>
</dbReference>
<dbReference type="HOGENOM" id="CLU_006301_9_3_11"/>
<dbReference type="Proteomes" id="UP000001685">
    <property type="component" value="Chromosome"/>
</dbReference>
<dbReference type="GO" id="GO:0005829">
    <property type="term" value="C:cytosol"/>
    <property type="evidence" value="ECO:0007669"/>
    <property type="project" value="TreeGrafter"/>
</dbReference>
<dbReference type="GO" id="GO:0005525">
    <property type="term" value="F:GTP binding"/>
    <property type="evidence" value="ECO:0007669"/>
    <property type="project" value="UniProtKB-KW"/>
</dbReference>
<dbReference type="GO" id="GO:0003924">
    <property type="term" value="F:GTPase activity"/>
    <property type="evidence" value="ECO:0007669"/>
    <property type="project" value="UniProtKB-UniRule"/>
</dbReference>
<dbReference type="GO" id="GO:0003743">
    <property type="term" value="F:translation initiation factor activity"/>
    <property type="evidence" value="ECO:0007669"/>
    <property type="project" value="UniProtKB-UniRule"/>
</dbReference>
<dbReference type="CDD" id="cd01887">
    <property type="entry name" value="IF2_eIF5B"/>
    <property type="match status" value="1"/>
</dbReference>
<dbReference type="CDD" id="cd03702">
    <property type="entry name" value="IF2_mtIF2_II"/>
    <property type="match status" value="1"/>
</dbReference>
<dbReference type="CDD" id="cd03692">
    <property type="entry name" value="mtIF2_IVc"/>
    <property type="match status" value="1"/>
</dbReference>
<dbReference type="FunFam" id="1.10.10.2480:FF:000003">
    <property type="entry name" value="Translation initiation factor IF-2"/>
    <property type="match status" value="1"/>
</dbReference>
<dbReference type="FunFam" id="2.40.30.10:FF:000007">
    <property type="entry name" value="Translation initiation factor IF-2"/>
    <property type="match status" value="1"/>
</dbReference>
<dbReference type="FunFam" id="2.40.30.10:FF:000008">
    <property type="entry name" value="Translation initiation factor IF-2"/>
    <property type="match status" value="1"/>
</dbReference>
<dbReference type="FunFam" id="3.40.50.10050:FF:000001">
    <property type="entry name" value="Translation initiation factor IF-2"/>
    <property type="match status" value="1"/>
</dbReference>
<dbReference type="FunFam" id="3.40.50.300:FF:000019">
    <property type="entry name" value="Translation initiation factor IF-2"/>
    <property type="match status" value="1"/>
</dbReference>
<dbReference type="Gene3D" id="1.10.10.2480">
    <property type="match status" value="1"/>
</dbReference>
<dbReference type="Gene3D" id="3.40.50.300">
    <property type="entry name" value="P-loop containing nucleotide triphosphate hydrolases"/>
    <property type="match status" value="1"/>
</dbReference>
<dbReference type="Gene3D" id="2.40.30.10">
    <property type="entry name" value="Translation factors"/>
    <property type="match status" value="2"/>
</dbReference>
<dbReference type="Gene3D" id="3.40.50.10050">
    <property type="entry name" value="Translation initiation factor IF- 2, domain 3"/>
    <property type="match status" value="1"/>
</dbReference>
<dbReference type="HAMAP" id="MF_00100_B">
    <property type="entry name" value="IF_2_B"/>
    <property type="match status" value="1"/>
</dbReference>
<dbReference type="InterPro" id="IPR053905">
    <property type="entry name" value="EF-G-like_DII"/>
</dbReference>
<dbReference type="InterPro" id="IPR044145">
    <property type="entry name" value="IF2_II"/>
</dbReference>
<dbReference type="InterPro" id="IPR006847">
    <property type="entry name" value="IF2_N"/>
</dbReference>
<dbReference type="InterPro" id="IPR027417">
    <property type="entry name" value="P-loop_NTPase"/>
</dbReference>
<dbReference type="InterPro" id="IPR005225">
    <property type="entry name" value="Small_GTP-bd"/>
</dbReference>
<dbReference type="InterPro" id="IPR000795">
    <property type="entry name" value="T_Tr_GTP-bd_dom"/>
</dbReference>
<dbReference type="InterPro" id="IPR000178">
    <property type="entry name" value="TF_IF2_bacterial-like"/>
</dbReference>
<dbReference type="InterPro" id="IPR015760">
    <property type="entry name" value="TIF_IF2"/>
</dbReference>
<dbReference type="InterPro" id="IPR023115">
    <property type="entry name" value="TIF_IF2_dom3"/>
</dbReference>
<dbReference type="InterPro" id="IPR036925">
    <property type="entry name" value="TIF_IF2_dom3_sf"/>
</dbReference>
<dbReference type="InterPro" id="IPR009000">
    <property type="entry name" value="Transl_B-barrel_sf"/>
</dbReference>
<dbReference type="NCBIfam" id="TIGR00487">
    <property type="entry name" value="IF-2"/>
    <property type="match status" value="1"/>
</dbReference>
<dbReference type="NCBIfam" id="TIGR00231">
    <property type="entry name" value="small_GTP"/>
    <property type="match status" value="1"/>
</dbReference>
<dbReference type="PANTHER" id="PTHR43381:SF5">
    <property type="entry name" value="TR-TYPE G DOMAIN-CONTAINING PROTEIN"/>
    <property type="match status" value="1"/>
</dbReference>
<dbReference type="PANTHER" id="PTHR43381">
    <property type="entry name" value="TRANSLATION INITIATION FACTOR IF-2-RELATED"/>
    <property type="match status" value="1"/>
</dbReference>
<dbReference type="Pfam" id="PF22042">
    <property type="entry name" value="EF-G_D2"/>
    <property type="match status" value="1"/>
</dbReference>
<dbReference type="Pfam" id="PF00009">
    <property type="entry name" value="GTP_EFTU"/>
    <property type="match status" value="1"/>
</dbReference>
<dbReference type="Pfam" id="PF11987">
    <property type="entry name" value="IF-2"/>
    <property type="match status" value="1"/>
</dbReference>
<dbReference type="Pfam" id="PF04760">
    <property type="entry name" value="IF2_N"/>
    <property type="match status" value="2"/>
</dbReference>
<dbReference type="PRINTS" id="PR01217">
    <property type="entry name" value="PRICHEXTENSN"/>
</dbReference>
<dbReference type="SMART" id="SM00173">
    <property type="entry name" value="RAS"/>
    <property type="match status" value="1"/>
</dbReference>
<dbReference type="SUPFAM" id="SSF52156">
    <property type="entry name" value="Initiation factor IF2/eIF5b, domain 3"/>
    <property type="match status" value="1"/>
</dbReference>
<dbReference type="SUPFAM" id="SSF52540">
    <property type="entry name" value="P-loop containing nucleoside triphosphate hydrolases"/>
    <property type="match status" value="1"/>
</dbReference>
<dbReference type="SUPFAM" id="SSF50447">
    <property type="entry name" value="Translation proteins"/>
    <property type="match status" value="2"/>
</dbReference>
<dbReference type="PROSITE" id="PS51722">
    <property type="entry name" value="G_TR_2"/>
    <property type="match status" value="1"/>
</dbReference>
<dbReference type="PROSITE" id="PS01176">
    <property type="entry name" value="IF2"/>
    <property type="match status" value="1"/>
</dbReference>
<protein>
    <recommendedName>
        <fullName evidence="2">Translation initiation factor IF-2</fullName>
    </recommendedName>
</protein>
<accession>B1VYN5</accession>
<evidence type="ECO:0000250" key="1"/>
<evidence type="ECO:0000255" key="2">
    <source>
        <dbReference type="HAMAP-Rule" id="MF_00100"/>
    </source>
</evidence>
<evidence type="ECO:0000256" key="3">
    <source>
        <dbReference type="SAM" id="MobiDB-lite"/>
    </source>
</evidence>